<comment type="function">
    <text evidence="3 5">Part of the ABC transporter DppABCDF involved in dipeptide transport (PubMed:7536291). Responsible for energy coupling to the transport system (Probable).</text>
</comment>
<comment type="function">
    <text evidence="2 4">When a foreign outer membrane heme receptor is expressed in E.coli, DppABCDF can also transport heme and its precursor, 5-aminolevulinic acid (ALA), from the periplasm into the cytoplasm.</text>
</comment>
<comment type="catalytic activity">
    <reaction evidence="6">
        <text>a dipeptide(out) + ATP + H2O = a dipeptide(in) + ADP + phosphate + H(+)</text>
        <dbReference type="Rhea" id="RHEA:23120"/>
        <dbReference type="ChEBI" id="CHEBI:15377"/>
        <dbReference type="ChEBI" id="CHEBI:15378"/>
        <dbReference type="ChEBI" id="CHEBI:30616"/>
        <dbReference type="ChEBI" id="CHEBI:43474"/>
        <dbReference type="ChEBI" id="CHEBI:90799"/>
        <dbReference type="ChEBI" id="CHEBI:456216"/>
        <dbReference type="EC" id="7.4.2.9"/>
    </reaction>
</comment>
<comment type="subunit">
    <text evidence="2 3">The complex is composed of two ATP-binding proteins (DppD and DppF), two transmembrane proteins (DppB and DppC) and a solute-binding protein (DppA) (PubMed:16905647, PubMed:7536291). MppA can replace DppA as binding protein for heme and ALA transport (PubMed:16905647).</text>
</comment>
<comment type="interaction">
    <interactant intactId="EBI-548206">
        <id>P0AAG0</id>
    </interactant>
    <interactant intactId="EBI-547937">
        <id>P0A968</id>
        <label>cspD</label>
    </interactant>
    <organismsDiffer>false</organismsDiffer>
    <experiments>3</experiments>
</comment>
<comment type="subcellular location">
    <subcellularLocation>
        <location evidence="5">Cell inner membrane</location>
        <topology evidence="5">Peripheral membrane protein</topology>
    </subcellularLocation>
</comment>
<comment type="disruption phenotype">
    <text evidence="2">Inactivation of the gene abolishes use of heme as an iron source.</text>
</comment>
<comment type="similarity">
    <text evidence="5">Belongs to the ABC transporter superfamily.</text>
</comment>
<dbReference type="EC" id="7.4.2.9" evidence="6"/>
<dbReference type="EMBL" id="L08399">
    <property type="protein sequence ID" value="AAA23705.1"/>
    <property type="molecule type" value="Genomic_DNA"/>
</dbReference>
<dbReference type="EMBL" id="U00039">
    <property type="protein sequence ID" value="AAB18519.1"/>
    <property type="molecule type" value="Genomic_DNA"/>
</dbReference>
<dbReference type="EMBL" id="U00096">
    <property type="protein sequence ID" value="AAC76566.1"/>
    <property type="molecule type" value="Genomic_DNA"/>
</dbReference>
<dbReference type="EMBL" id="AP009048">
    <property type="protein sequence ID" value="BAE77753.1"/>
    <property type="molecule type" value="Genomic_DNA"/>
</dbReference>
<dbReference type="PIR" id="S61404">
    <property type="entry name" value="S61404"/>
</dbReference>
<dbReference type="RefSeq" id="NP_417998.1">
    <property type="nucleotide sequence ID" value="NC_000913.3"/>
</dbReference>
<dbReference type="RefSeq" id="WP_001196486.1">
    <property type="nucleotide sequence ID" value="NZ_STEB01000018.1"/>
</dbReference>
<dbReference type="PDB" id="8Z1V">
    <property type="method" value="EM"/>
    <property type="resolution" value="3.16 A"/>
    <property type="chains" value="C=1-327"/>
</dbReference>
<dbReference type="PDB" id="8Z1W">
    <property type="method" value="EM"/>
    <property type="resolution" value="3.00 A"/>
    <property type="chains" value="C=1-327"/>
</dbReference>
<dbReference type="PDB" id="8Z1X">
    <property type="method" value="EM"/>
    <property type="resolution" value="3.20 A"/>
    <property type="chains" value="C=1-327"/>
</dbReference>
<dbReference type="PDB" id="8Z1Y">
    <property type="method" value="EM"/>
    <property type="resolution" value="2.73 A"/>
    <property type="chains" value="C=1-327"/>
</dbReference>
<dbReference type="PDBsum" id="8Z1V"/>
<dbReference type="PDBsum" id="8Z1W"/>
<dbReference type="PDBsum" id="8Z1X"/>
<dbReference type="PDBsum" id="8Z1Y"/>
<dbReference type="EMDB" id="EMD-39737"/>
<dbReference type="EMDB" id="EMD-39738"/>
<dbReference type="EMDB" id="EMD-39739"/>
<dbReference type="EMDB" id="EMD-39740"/>
<dbReference type="SMR" id="P0AAG0"/>
<dbReference type="BioGRID" id="4262534">
    <property type="interactions" value="267"/>
</dbReference>
<dbReference type="BioGRID" id="852373">
    <property type="interactions" value="2"/>
</dbReference>
<dbReference type="ComplexPortal" id="CPX-4345">
    <property type="entry name" value="Heme/dipeptide ABC transporter complex, dppA variant"/>
</dbReference>
<dbReference type="ComplexPortal" id="CPX-4346">
    <property type="entry name" value="Heme/dipeptide ABC transporter complex, mppA variant"/>
</dbReference>
<dbReference type="DIP" id="DIP-47940N"/>
<dbReference type="FunCoup" id="P0AAG0">
    <property type="interactions" value="285"/>
</dbReference>
<dbReference type="IntAct" id="P0AAG0">
    <property type="interactions" value="2"/>
</dbReference>
<dbReference type="STRING" id="511145.b3541"/>
<dbReference type="jPOST" id="P0AAG0"/>
<dbReference type="PaxDb" id="511145-b3541"/>
<dbReference type="EnsemblBacteria" id="AAC76566">
    <property type="protein sequence ID" value="AAC76566"/>
    <property type="gene ID" value="b3541"/>
</dbReference>
<dbReference type="GeneID" id="75201990"/>
<dbReference type="GeneID" id="948065"/>
<dbReference type="KEGG" id="ecj:JW3510"/>
<dbReference type="KEGG" id="eco:b3541"/>
<dbReference type="KEGG" id="ecoc:C3026_19190"/>
<dbReference type="PATRIC" id="fig|1411691.4.peg.3174"/>
<dbReference type="EchoBASE" id="EB2511"/>
<dbReference type="eggNOG" id="COG0444">
    <property type="taxonomic scope" value="Bacteria"/>
</dbReference>
<dbReference type="HOGENOM" id="CLU_000604_1_23_6"/>
<dbReference type="InParanoid" id="P0AAG0"/>
<dbReference type="OMA" id="FTLMGMP"/>
<dbReference type="OrthoDB" id="9784450at2"/>
<dbReference type="PhylomeDB" id="P0AAG0"/>
<dbReference type="BioCyc" id="EcoCyc:DPPD-MONOMER"/>
<dbReference type="BioCyc" id="MetaCyc:DPPD-MONOMER"/>
<dbReference type="PRO" id="PR:P0AAG0"/>
<dbReference type="Proteomes" id="UP000000625">
    <property type="component" value="Chromosome"/>
</dbReference>
<dbReference type="GO" id="GO:0055052">
    <property type="term" value="C:ATP-binding cassette (ABC) transporter complex, substrate-binding subunit-containing"/>
    <property type="evidence" value="ECO:0000303"/>
    <property type="project" value="EcoCyc"/>
</dbReference>
<dbReference type="GO" id="GO:0016020">
    <property type="term" value="C:membrane"/>
    <property type="evidence" value="ECO:0000303"/>
    <property type="project" value="ComplexPortal"/>
</dbReference>
<dbReference type="GO" id="GO:0005886">
    <property type="term" value="C:plasma membrane"/>
    <property type="evidence" value="ECO:0000314"/>
    <property type="project" value="EcoCyc"/>
</dbReference>
<dbReference type="GO" id="GO:0051539">
    <property type="term" value="F:4 iron, 4 sulfur cluster binding"/>
    <property type="evidence" value="ECO:0000314"/>
    <property type="project" value="EcoCyc"/>
</dbReference>
<dbReference type="GO" id="GO:0005524">
    <property type="term" value="F:ATP binding"/>
    <property type="evidence" value="ECO:0000255"/>
    <property type="project" value="EcoCyc"/>
</dbReference>
<dbReference type="GO" id="GO:0016887">
    <property type="term" value="F:ATP hydrolysis activity"/>
    <property type="evidence" value="ECO:0007669"/>
    <property type="project" value="InterPro"/>
</dbReference>
<dbReference type="GO" id="GO:0015232">
    <property type="term" value="F:heme transmembrane transporter activity"/>
    <property type="evidence" value="ECO:0000315"/>
    <property type="project" value="EcoliWiki"/>
</dbReference>
<dbReference type="GO" id="GO:0042938">
    <property type="term" value="P:dipeptide transport"/>
    <property type="evidence" value="ECO:0000303"/>
    <property type="project" value="ComplexPortal"/>
</dbReference>
<dbReference type="GO" id="GO:0035351">
    <property type="term" value="P:heme transmembrane transport"/>
    <property type="evidence" value="ECO:0000303"/>
    <property type="project" value="ComplexPortal"/>
</dbReference>
<dbReference type="GO" id="GO:0015031">
    <property type="term" value="P:protein transport"/>
    <property type="evidence" value="ECO:0007669"/>
    <property type="project" value="UniProtKB-KW"/>
</dbReference>
<dbReference type="CDD" id="cd03257">
    <property type="entry name" value="ABC_NikE_OppD_transporters"/>
    <property type="match status" value="1"/>
</dbReference>
<dbReference type="FunFam" id="3.40.50.300:FF:000016">
    <property type="entry name" value="Oligopeptide ABC transporter ATP-binding component"/>
    <property type="match status" value="1"/>
</dbReference>
<dbReference type="Gene3D" id="3.40.50.300">
    <property type="entry name" value="P-loop containing nucleotide triphosphate hydrolases"/>
    <property type="match status" value="1"/>
</dbReference>
<dbReference type="InterPro" id="IPR003593">
    <property type="entry name" value="AAA+_ATPase"/>
</dbReference>
<dbReference type="InterPro" id="IPR050388">
    <property type="entry name" value="ABC_Ni/Peptide_Import"/>
</dbReference>
<dbReference type="InterPro" id="IPR003439">
    <property type="entry name" value="ABC_transporter-like_ATP-bd"/>
</dbReference>
<dbReference type="InterPro" id="IPR017871">
    <property type="entry name" value="ABC_transporter-like_CS"/>
</dbReference>
<dbReference type="InterPro" id="IPR013563">
    <property type="entry name" value="Oligopep_ABC_C"/>
</dbReference>
<dbReference type="InterPro" id="IPR027417">
    <property type="entry name" value="P-loop_NTPase"/>
</dbReference>
<dbReference type="NCBIfam" id="TIGR01727">
    <property type="entry name" value="oligo_HPY"/>
    <property type="match status" value="1"/>
</dbReference>
<dbReference type="NCBIfam" id="NF008246">
    <property type="entry name" value="PRK11022.1"/>
    <property type="match status" value="1"/>
</dbReference>
<dbReference type="PANTHER" id="PTHR43297:SF2">
    <property type="entry name" value="DIPEPTIDE TRANSPORT ATP-BINDING PROTEIN DPPD"/>
    <property type="match status" value="1"/>
</dbReference>
<dbReference type="PANTHER" id="PTHR43297">
    <property type="entry name" value="OLIGOPEPTIDE TRANSPORT ATP-BINDING PROTEIN APPD"/>
    <property type="match status" value="1"/>
</dbReference>
<dbReference type="Pfam" id="PF00005">
    <property type="entry name" value="ABC_tran"/>
    <property type="match status" value="1"/>
</dbReference>
<dbReference type="Pfam" id="PF08352">
    <property type="entry name" value="oligo_HPY"/>
    <property type="match status" value="1"/>
</dbReference>
<dbReference type="SMART" id="SM00382">
    <property type="entry name" value="AAA"/>
    <property type="match status" value="1"/>
</dbReference>
<dbReference type="SUPFAM" id="SSF52540">
    <property type="entry name" value="P-loop containing nucleoside triphosphate hydrolases"/>
    <property type="match status" value="1"/>
</dbReference>
<dbReference type="PROSITE" id="PS00211">
    <property type="entry name" value="ABC_TRANSPORTER_1"/>
    <property type="match status" value="1"/>
</dbReference>
<dbReference type="PROSITE" id="PS50893">
    <property type="entry name" value="ABC_TRANSPORTER_2"/>
    <property type="match status" value="1"/>
</dbReference>
<reference key="1">
    <citation type="journal article" date="1994" name="Mol. Microbiol.">
        <title>The dipeptide permease of Escherichia coli closely resembles other bacterial transport systems and shows growth-phase-dependent expression.</title>
        <authorList>
            <person name="Abouhamad W.N."/>
            <person name="Manson M.D."/>
        </authorList>
    </citation>
    <scope>NUCLEOTIDE SEQUENCE [GENOMIC DNA]</scope>
    <scope>FUNCTION</scope>
    <scope>CATALYTIC ACTIVITY</scope>
    <scope>SUBUNIT</scope>
    <source>
        <strain>K12 / MM500</strain>
    </source>
</reference>
<reference key="2">
    <citation type="journal article" date="1994" name="Nucleic Acids Res.">
        <title>Analysis of the Escherichia coli genome. V. DNA sequence of the region from 76.0 to 81.5 minutes.</title>
        <authorList>
            <person name="Sofia H.J."/>
            <person name="Burland V."/>
            <person name="Daniels D.L."/>
            <person name="Plunkett G. III"/>
            <person name="Blattner F.R."/>
        </authorList>
    </citation>
    <scope>NUCLEOTIDE SEQUENCE [LARGE SCALE GENOMIC DNA]</scope>
    <source>
        <strain>K12 / MG1655 / ATCC 47076</strain>
    </source>
</reference>
<reference key="3">
    <citation type="journal article" date="1997" name="Science">
        <title>The complete genome sequence of Escherichia coli K-12.</title>
        <authorList>
            <person name="Blattner F.R."/>
            <person name="Plunkett G. III"/>
            <person name="Bloch C.A."/>
            <person name="Perna N.T."/>
            <person name="Burland V."/>
            <person name="Riley M."/>
            <person name="Collado-Vides J."/>
            <person name="Glasner J.D."/>
            <person name="Rode C.K."/>
            <person name="Mayhew G.F."/>
            <person name="Gregor J."/>
            <person name="Davis N.W."/>
            <person name="Kirkpatrick H.A."/>
            <person name="Goeden M.A."/>
            <person name="Rose D.J."/>
            <person name="Mau B."/>
            <person name="Shao Y."/>
        </authorList>
    </citation>
    <scope>NUCLEOTIDE SEQUENCE [LARGE SCALE GENOMIC DNA]</scope>
    <source>
        <strain>K12 / MG1655 / ATCC 47076</strain>
    </source>
</reference>
<reference key="4">
    <citation type="journal article" date="2006" name="Mol. Syst. Biol.">
        <title>Highly accurate genome sequences of Escherichia coli K-12 strains MG1655 and W3110.</title>
        <authorList>
            <person name="Hayashi K."/>
            <person name="Morooka N."/>
            <person name="Yamamoto Y."/>
            <person name="Fujita K."/>
            <person name="Isono K."/>
            <person name="Choi S."/>
            <person name="Ohtsubo E."/>
            <person name="Baba T."/>
            <person name="Wanner B.L."/>
            <person name="Mori H."/>
            <person name="Horiuchi T."/>
        </authorList>
    </citation>
    <scope>NUCLEOTIDE SEQUENCE [LARGE SCALE GENOMIC DNA]</scope>
    <source>
        <strain>K12 / W3110 / ATCC 27325 / DSM 5911</strain>
    </source>
</reference>
<reference key="5">
    <citation type="journal article" date="1993" name="J. Bacteriol.">
        <title>The periplasmic dipeptide permease system transports 5-aminolevulinic acid in Escherichia coli.</title>
        <authorList>
            <person name="Verkamp E."/>
            <person name="Backman V.M."/>
            <person name="Bjoernsson J.M."/>
            <person name="Soell D."/>
            <person name="Eggertsson G."/>
        </authorList>
    </citation>
    <scope>FUNCTION IN 5-AMINOLEVULINIC ACID TRANSPORT</scope>
</reference>
<reference key="6">
    <citation type="journal article" date="2006" name="Proc. Natl. Acad. Sci. U.S.A.">
        <title>The housekeeping dipeptide permease is the Escherichia coli heme transporter and functions with two optional peptide binding proteins.</title>
        <authorList>
            <person name="Letoffe S."/>
            <person name="Delepelaire P."/>
            <person name="Wandersman C."/>
        </authorList>
    </citation>
    <scope>FUNCTION IN HEME TRANSPORT</scope>
    <scope>SUBUNIT</scope>
    <scope>DISRUPTION PHENOTYPE</scope>
</reference>
<proteinExistence type="evidence at protein level"/>
<name>DPPD_ECOLI</name>
<feature type="chain" id="PRO_0000092313" description="Dipeptide transport ATP-binding protein DppD">
    <location>
        <begin position="1"/>
        <end position="327"/>
    </location>
</feature>
<feature type="domain" description="ABC transporter" evidence="1">
    <location>
        <begin position="4"/>
        <end position="254"/>
    </location>
</feature>
<feature type="binding site" evidence="1">
    <location>
        <begin position="40"/>
        <end position="47"/>
    </location>
    <ligand>
        <name>ATP</name>
        <dbReference type="ChEBI" id="CHEBI:30616"/>
    </ligand>
</feature>
<protein>
    <recommendedName>
        <fullName evidence="5">Dipeptide transport ATP-binding protein DppD</fullName>
        <ecNumber evidence="6">7.4.2.9</ecNumber>
    </recommendedName>
</protein>
<sequence length="327" mass="35844">MALLNVDKLSVHFGDESAPFRAVDRISYSVKQGEVVGIVGESGSGKSVSSLAIMGLIDYPGRVMAEKLEFNGQDLQRISEKERRNLVGAEVAMIFQDPMTSLNPCYTVGFQIMEAIKVHQGGNKSTRRQRAIDLLNQVGIPDPASRLDVYPHQLSGGMSQRVMIAMAIACRPKLLIADEPTTALDVTIQAQIIELLLELQQKENMALVLITHDLALVAEAAHKIIVMYAGQVVETGDAHAIFHAPRHPYTQALLRALPEFAQDKERLASLPGVVPGKYDRPNGCLLNPRCPYATDRCRAEEPALNMLADGRQSKCHYPLDDAGRPTL</sequence>
<evidence type="ECO:0000255" key="1">
    <source>
        <dbReference type="PROSITE-ProRule" id="PRU00434"/>
    </source>
</evidence>
<evidence type="ECO:0000269" key="2">
    <source>
    </source>
</evidence>
<evidence type="ECO:0000269" key="3">
    <source>
    </source>
</evidence>
<evidence type="ECO:0000269" key="4">
    <source>
    </source>
</evidence>
<evidence type="ECO:0000305" key="5"/>
<evidence type="ECO:0000305" key="6">
    <source>
    </source>
</evidence>
<accession>P0AAG0</accession>
<accession>P37314</accession>
<accession>Q2M7K3</accession>
<organism>
    <name type="scientific">Escherichia coli (strain K12)</name>
    <dbReference type="NCBI Taxonomy" id="83333"/>
    <lineage>
        <taxon>Bacteria</taxon>
        <taxon>Pseudomonadati</taxon>
        <taxon>Pseudomonadota</taxon>
        <taxon>Gammaproteobacteria</taxon>
        <taxon>Enterobacterales</taxon>
        <taxon>Enterobacteriaceae</taxon>
        <taxon>Escherichia</taxon>
    </lineage>
</organism>
<keyword id="KW-0002">3D-structure</keyword>
<keyword id="KW-0067">ATP-binding</keyword>
<keyword id="KW-0997">Cell inner membrane</keyword>
<keyword id="KW-1003">Cell membrane</keyword>
<keyword id="KW-0472">Membrane</keyword>
<keyword id="KW-0547">Nucleotide-binding</keyword>
<keyword id="KW-0571">Peptide transport</keyword>
<keyword id="KW-0653">Protein transport</keyword>
<keyword id="KW-1185">Reference proteome</keyword>
<keyword id="KW-1278">Translocase</keyword>
<keyword id="KW-0813">Transport</keyword>
<gene>
    <name type="primary">dppD</name>
    <name type="ordered locus">b3541</name>
    <name type="ordered locus">JW3510</name>
</gene>